<accession>B0BMZ3</accession>
<gene>
    <name type="primary">Gimd1</name>
</gene>
<feature type="chain" id="PRO_0000419201" description="GTPase IMAP family member GIMD1">
    <location>
        <begin position="1"/>
        <end position="216"/>
    </location>
</feature>
<feature type="domain" description="AIG1-type G" evidence="2">
    <location>
        <begin position="5"/>
        <end position="216"/>
    </location>
</feature>
<feature type="binding site" evidence="1">
    <location>
        <begin position="14"/>
        <end position="22"/>
    </location>
    <ligand>
        <name>GTP</name>
        <dbReference type="ChEBI" id="CHEBI:37565"/>
    </ligand>
</feature>
<feature type="binding site" evidence="1">
    <location>
        <position position="35"/>
    </location>
    <ligand>
        <name>GTP</name>
        <dbReference type="ChEBI" id="CHEBI:37565"/>
    </ligand>
</feature>
<feature type="binding site" evidence="1">
    <location>
        <begin position="147"/>
        <end position="149"/>
    </location>
    <ligand>
        <name>GTP</name>
        <dbReference type="ChEBI" id="CHEBI:37565"/>
    </ligand>
</feature>
<organism>
    <name type="scientific">Rattus norvegicus</name>
    <name type="common">Rat</name>
    <dbReference type="NCBI Taxonomy" id="10116"/>
    <lineage>
        <taxon>Eukaryota</taxon>
        <taxon>Metazoa</taxon>
        <taxon>Chordata</taxon>
        <taxon>Craniata</taxon>
        <taxon>Vertebrata</taxon>
        <taxon>Euteleostomi</taxon>
        <taxon>Mammalia</taxon>
        <taxon>Eutheria</taxon>
        <taxon>Euarchontoglires</taxon>
        <taxon>Glires</taxon>
        <taxon>Rodentia</taxon>
        <taxon>Myomorpha</taxon>
        <taxon>Muroidea</taxon>
        <taxon>Muridae</taxon>
        <taxon>Murinae</taxon>
        <taxon>Rattus</taxon>
    </lineage>
</organism>
<protein>
    <recommendedName>
        <fullName>GTPase IMAP family member GIMD1</fullName>
    </recommendedName>
    <alternativeName>
        <fullName>GIMAP family P-loop NTPase domain-containing protein 1</fullName>
    </alternativeName>
</protein>
<dbReference type="EMBL" id="AABR06020787">
    <property type="status" value="NOT_ANNOTATED_CDS"/>
    <property type="molecule type" value="Genomic_DNA"/>
</dbReference>
<dbReference type="EMBL" id="BC158622">
    <property type="protein sequence ID" value="AAI58623.1"/>
    <property type="molecule type" value="mRNA"/>
</dbReference>
<dbReference type="RefSeq" id="NP_001107254.2">
    <property type="nucleotide sequence ID" value="NM_001113782.2"/>
</dbReference>
<dbReference type="SMR" id="B0BMZ3"/>
<dbReference type="STRING" id="10116.ENSRNOP00000060170"/>
<dbReference type="PhosphoSitePlus" id="B0BMZ3"/>
<dbReference type="PaxDb" id="10116-ENSRNOP00000060170"/>
<dbReference type="GeneID" id="362042"/>
<dbReference type="KEGG" id="rno:362042"/>
<dbReference type="AGR" id="RGD:1563706"/>
<dbReference type="CTD" id="100507096"/>
<dbReference type="RGD" id="1563706">
    <property type="gene designation" value="Gimd1"/>
</dbReference>
<dbReference type="VEuPathDB" id="HostDB:ENSRNOG00000042721"/>
<dbReference type="eggNOG" id="ENOG502S1B7">
    <property type="taxonomic scope" value="Eukaryota"/>
</dbReference>
<dbReference type="HOGENOM" id="CLU_010468_3_3_1"/>
<dbReference type="InParanoid" id="B0BMZ3"/>
<dbReference type="OMA" id="GKAMTDP"/>
<dbReference type="OrthoDB" id="8954335at2759"/>
<dbReference type="PhylomeDB" id="B0BMZ3"/>
<dbReference type="PRO" id="PR:B0BMZ3"/>
<dbReference type="Proteomes" id="UP000002494">
    <property type="component" value="Chromosome 2"/>
</dbReference>
<dbReference type="Bgee" id="ENSRNOG00000042721">
    <property type="expression patterns" value="Expressed in jejunum and 7 other cell types or tissues"/>
</dbReference>
<dbReference type="GO" id="GO:0005525">
    <property type="term" value="F:GTP binding"/>
    <property type="evidence" value="ECO:0007669"/>
    <property type="project" value="UniProtKB-KW"/>
</dbReference>
<dbReference type="FunFam" id="3.40.50.300:FF:001392">
    <property type="entry name" value="GTPase IMAP family member GIMD1"/>
    <property type="match status" value="1"/>
</dbReference>
<dbReference type="Gene3D" id="3.40.50.300">
    <property type="entry name" value="P-loop containing nucleotide triphosphate hydrolases"/>
    <property type="match status" value="1"/>
</dbReference>
<dbReference type="InterPro" id="IPR006703">
    <property type="entry name" value="G_AIG1"/>
</dbReference>
<dbReference type="InterPro" id="IPR045058">
    <property type="entry name" value="GIMA/IAN/Toc"/>
</dbReference>
<dbReference type="InterPro" id="IPR027417">
    <property type="entry name" value="P-loop_NTPase"/>
</dbReference>
<dbReference type="PANTHER" id="PTHR10903:SF103">
    <property type="entry name" value="GTPASE IMAP FAMILY MEMBER GIMD1"/>
    <property type="match status" value="1"/>
</dbReference>
<dbReference type="PANTHER" id="PTHR10903">
    <property type="entry name" value="GTPASE, IMAP FAMILY MEMBER-RELATED"/>
    <property type="match status" value="1"/>
</dbReference>
<dbReference type="Pfam" id="PF04548">
    <property type="entry name" value="AIG1"/>
    <property type="match status" value="1"/>
</dbReference>
<dbReference type="SUPFAM" id="SSF52540">
    <property type="entry name" value="P-loop containing nucleoside triphosphate hydrolases"/>
    <property type="match status" value="1"/>
</dbReference>
<dbReference type="PROSITE" id="PS51720">
    <property type="entry name" value="G_AIG1"/>
    <property type="match status" value="1"/>
</dbReference>
<proteinExistence type="evidence at transcript level"/>
<name>GIMD1_RAT</name>
<sequence>MDANKMIINLAVLGKTQSGKSSAGNVLLGSADFYSRFAPGSVTKDCSLGRSCHIHGFMRRGGHEISLQIQVLDTPGYPHSKLSTRCVKQEVKKALEHHFGQEGLHLALLVHRADMPFFGQEASDSVQLIQELLGDSWKNYTAILFTHAEKIKEAGLSEEEYLCEASDALLTLLNSVQHRHIFLYERGNSWSEQRIKILERIMEFIKENHFQVLSFT</sequence>
<reference key="1">
    <citation type="journal article" date="2004" name="Nature">
        <title>Genome sequence of the Brown Norway rat yields insights into mammalian evolution.</title>
        <authorList>
            <person name="Gibbs R.A."/>
            <person name="Weinstock G.M."/>
            <person name="Metzker M.L."/>
            <person name="Muzny D.M."/>
            <person name="Sodergren E.J."/>
            <person name="Scherer S."/>
            <person name="Scott G."/>
            <person name="Steffen D."/>
            <person name="Worley K.C."/>
            <person name="Burch P.E."/>
            <person name="Okwuonu G."/>
            <person name="Hines S."/>
            <person name="Lewis L."/>
            <person name="Deramo C."/>
            <person name="Delgado O."/>
            <person name="Dugan-Rocha S."/>
            <person name="Miner G."/>
            <person name="Morgan M."/>
            <person name="Hawes A."/>
            <person name="Gill R."/>
            <person name="Holt R.A."/>
            <person name="Adams M.D."/>
            <person name="Amanatides P.G."/>
            <person name="Baden-Tillson H."/>
            <person name="Barnstead M."/>
            <person name="Chin S."/>
            <person name="Evans C.A."/>
            <person name="Ferriera S."/>
            <person name="Fosler C."/>
            <person name="Glodek A."/>
            <person name="Gu Z."/>
            <person name="Jennings D."/>
            <person name="Kraft C.L."/>
            <person name="Nguyen T."/>
            <person name="Pfannkoch C.M."/>
            <person name="Sitter C."/>
            <person name="Sutton G.G."/>
            <person name="Venter J.C."/>
            <person name="Woodage T."/>
            <person name="Smith D."/>
            <person name="Lee H.-M."/>
            <person name="Gustafson E."/>
            <person name="Cahill P."/>
            <person name="Kana A."/>
            <person name="Doucette-Stamm L."/>
            <person name="Weinstock K."/>
            <person name="Fechtel K."/>
            <person name="Weiss R.B."/>
            <person name="Dunn D.M."/>
            <person name="Green E.D."/>
            <person name="Blakesley R.W."/>
            <person name="Bouffard G.G."/>
            <person name="De Jong P.J."/>
            <person name="Osoegawa K."/>
            <person name="Zhu B."/>
            <person name="Marra M."/>
            <person name="Schein J."/>
            <person name="Bosdet I."/>
            <person name="Fjell C."/>
            <person name="Jones S."/>
            <person name="Krzywinski M."/>
            <person name="Mathewson C."/>
            <person name="Siddiqui A."/>
            <person name="Wye N."/>
            <person name="McPherson J."/>
            <person name="Zhao S."/>
            <person name="Fraser C.M."/>
            <person name="Shetty J."/>
            <person name="Shatsman S."/>
            <person name="Geer K."/>
            <person name="Chen Y."/>
            <person name="Abramzon S."/>
            <person name="Nierman W.C."/>
            <person name="Havlak P.H."/>
            <person name="Chen R."/>
            <person name="Durbin K.J."/>
            <person name="Egan A."/>
            <person name="Ren Y."/>
            <person name="Song X.-Z."/>
            <person name="Li B."/>
            <person name="Liu Y."/>
            <person name="Qin X."/>
            <person name="Cawley S."/>
            <person name="Cooney A.J."/>
            <person name="D'Souza L.M."/>
            <person name="Martin K."/>
            <person name="Wu J.Q."/>
            <person name="Gonzalez-Garay M.L."/>
            <person name="Jackson A.R."/>
            <person name="Kalafus K.J."/>
            <person name="McLeod M.P."/>
            <person name="Milosavljevic A."/>
            <person name="Virk D."/>
            <person name="Volkov A."/>
            <person name="Wheeler D.A."/>
            <person name="Zhang Z."/>
            <person name="Bailey J.A."/>
            <person name="Eichler E.E."/>
            <person name="Tuzun E."/>
            <person name="Birney E."/>
            <person name="Mongin E."/>
            <person name="Ureta-Vidal A."/>
            <person name="Woodwark C."/>
            <person name="Zdobnov E."/>
            <person name="Bork P."/>
            <person name="Suyama M."/>
            <person name="Torrents D."/>
            <person name="Alexandersson M."/>
            <person name="Trask B.J."/>
            <person name="Young J.M."/>
            <person name="Huang H."/>
            <person name="Wang H."/>
            <person name="Xing H."/>
            <person name="Daniels S."/>
            <person name="Gietzen D."/>
            <person name="Schmidt J."/>
            <person name="Stevens K."/>
            <person name="Vitt U."/>
            <person name="Wingrove J."/>
            <person name="Camara F."/>
            <person name="Mar Alba M."/>
            <person name="Abril J.F."/>
            <person name="Guigo R."/>
            <person name="Smit A."/>
            <person name="Dubchak I."/>
            <person name="Rubin E.M."/>
            <person name="Couronne O."/>
            <person name="Poliakov A."/>
            <person name="Huebner N."/>
            <person name="Ganten D."/>
            <person name="Goesele C."/>
            <person name="Hummel O."/>
            <person name="Kreitler T."/>
            <person name="Lee Y.-A."/>
            <person name="Monti J."/>
            <person name="Schulz H."/>
            <person name="Zimdahl H."/>
            <person name="Himmelbauer H."/>
            <person name="Lehrach H."/>
            <person name="Jacob H.J."/>
            <person name="Bromberg S."/>
            <person name="Gullings-Handley J."/>
            <person name="Jensen-Seaman M.I."/>
            <person name="Kwitek A.E."/>
            <person name="Lazar J."/>
            <person name="Pasko D."/>
            <person name="Tonellato P.J."/>
            <person name="Twigger S."/>
            <person name="Ponting C.P."/>
            <person name="Duarte J.M."/>
            <person name="Rice S."/>
            <person name="Goodstadt L."/>
            <person name="Beatson S.A."/>
            <person name="Emes R.D."/>
            <person name="Winter E.E."/>
            <person name="Webber C."/>
            <person name="Brandt P."/>
            <person name="Nyakatura G."/>
            <person name="Adetobi M."/>
            <person name="Chiaromonte F."/>
            <person name="Elnitski L."/>
            <person name="Eswara P."/>
            <person name="Hardison R.C."/>
            <person name="Hou M."/>
            <person name="Kolbe D."/>
            <person name="Makova K."/>
            <person name="Miller W."/>
            <person name="Nekrutenko A."/>
            <person name="Riemer C."/>
            <person name="Schwartz S."/>
            <person name="Taylor J."/>
            <person name="Yang S."/>
            <person name="Zhang Y."/>
            <person name="Lindpaintner K."/>
            <person name="Andrews T.D."/>
            <person name="Caccamo M."/>
            <person name="Clamp M."/>
            <person name="Clarke L."/>
            <person name="Curwen V."/>
            <person name="Durbin R.M."/>
            <person name="Eyras E."/>
            <person name="Searle S.M."/>
            <person name="Cooper G.M."/>
            <person name="Batzoglou S."/>
            <person name="Brudno M."/>
            <person name="Sidow A."/>
            <person name="Stone E.A."/>
            <person name="Payseur B.A."/>
            <person name="Bourque G."/>
            <person name="Lopez-Otin C."/>
            <person name="Puente X.S."/>
            <person name="Chakrabarti K."/>
            <person name="Chatterji S."/>
            <person name="Dewey C."/>
            <person name="Pachter L."/>
            <person name="Bray N."/>
            <person name="Yap V.B."/>
            <person name="Caspi A."/>
            <person name="Tesler G."/>
            <person name="Pevzner P.A."/>
            <person name="Haussler D."/>
            <person name="Roskin K.M."/>
            <person name="Baertsch R."/>
            <person name="Clawson H."/>
            <person name="Furey T.S."/>
            <person name="Hinrichs A.S."/>
            <person name="Karolchik D."/>
            <person name="Kent W.J."/>
            <person name="Rosenbloom K.R."/>
            <person name="Trumbower H."/>
            <person name="Weirauch M."/>
            <person name="Cooper D.N."/>
            <person name="Stenson P.D."/>
            <person name="Ma B."/>
            <person name="Brent M."/>
            <person name="Arumugam M."/>
            <person name="Shteynberg D."/>
            <person name="Copley R.R."/>
            <person name="Taylor M.S."/>
            <person name="Riethman H."/>
            <person name="Mudunuri U."/>
            <person name="Peterson J."/>
            <person name="Guyer M."/>
            <person name="Felsenfeld A."/>
            <person name="Old S."/>
            <person name="Mockrin S."/>
            <person name="Collins F.S."/>
        </authorList>
    </citation>
    <scope>NUCLEOTIDE SEQUENCE [LARGE SCALE GENOMIC DNA]</scope>
    <source>
        <strain>Brown Norway</strain>
    </source>
</reference>
<reference key="2">
    <citation type="journal article" date="2004" name="Genome Res.">
        <title>The status, quality, and expansion of the NIH full-length cDNA project: the Mammalian Gene Collection (MGC).</title>
        <authorList>
            <consortium name="The MGC Project Team"/>
        </authorList>
    </citation>
    <scope>NUCLEOTIDE SEQUENCE [LARGE SCALE MRNA]</scope>
    <source>
        <tissue>Testis</tissue>
    </source>
</reference>
<evidence type="ECO:0000250" key="1"/>
<evidence type="ECO:0000255" key="2">
    <source>
        <dbReference type="PROSITE-ProRule" id="PRU01057"/>
    </source>
</evidence>
<evidence type="ECO:0000305" key="3"/>
<keyword id="KW-0342">GTP-binding</keyword>
<keyword id="KW-0547">Nucleotide-binding</keyword>
<keyword id="KW-1185">Reference proteome</keyword>
<comment type="similarity">
    <text evidence="3">Belongs to the TRAFAC class TrmE-Era-EngA-EngB-Septin-like GTPase superfamily. AIG1/Toc34/Toc159-like paraseptin GTPase family. IAN subfamily.</text>
</comment>